<organism>
    <name type="scientific">Bacillus cereus (strain G9842)</name>
    <dbReference type="NCBI Taxonomy" id="405531"/>
    <lineage>
        <taxon>Bacteria</taxon>
        <taxon>Bacillati</taxon>
        <taxon>Bacillota</taxon>
        <taxon>Bacilli</taxon>
        <taxon>Bacillales</taxon>
        <taxon>Bacillaceae</taxon>
        <taxon>Bacillus</taxon>
        <taxon>Bacillus cereus group</taxon>
    </lineage>
</organism>
<feature type="chain" id="PRO_1000140219" description="Type III pantothenate kinase">
    <location>
        <begin position="1"/>
        <end position="262"/>
    </location>
</feature>
<feature type="active site" description="Proton acceptor" evidence="1">
    <location>
        <position position="109"/>
    </location>
</feature>
<feature type="binding site" evidence="1">
    <location>
        <begin position="6"/>
        <end position="13"/>
    </location>
    <ligand>
        <name>ATP</name>
        <dbReference type="ChEBI" id="CHEBI:30616"/>
    </ligand>
</feature>
<feature type="binding site" evidence="1">
    <location>
        <position position="100"/>
    </location>
    <ligand>
        <name>substrate</name>
    </ligand>
</feature>
<feature type="binding site" evidence="1">
    <location>
        <begin position="107"/>
        <end position="110"/>
    </location>
    <ligand>
        <name>substrate</name>
    </ligand>
</feature>
<feature type="binding site" evidence="1">
    <location>
        <position position="129"/>
    </location>
    <ligand>
        <name>K(+)</name>
        <dbReference type="ChEBI" id="CHEBI:29103"/>
    </ligand>
</feature>
<feature type="binding site" evidence="1">
    <location>
        <position position="132"/>
    </location>
    <ligand>
        <name>ATP</name>
        <dbReference type="ChEBI" id="CHEBI:30616"/>
    </ligand>
</feature>
<feature type="binding site" evidence="1">
    <location>
        <position position="184"/>
    </location>
    <ligand>
        <name>substrate</name>
    </ligand>
</feature>
<evidence type="ECO:0000255" key="1">
    <source>
        <dbReference type="HAMAP-Rule" id="MF_01274"/>
    </source>
</evidence>
<reference key="1">
    <citation type="submission" date="2008-10" db="EMBL/GenBank/DDBJ databases">
        <title>Genome sequence of Bacillus cereus G9842.</title>
        <authorList>
            <person name="Dodson R.J."/>
            <person name="Durkin A.S."/>
            <person name="Rosovitz M.J."/>
            <person name="Rasko D.A."/>
            <person name="Hoffmaster A."/>
            <person name="Ravel J."/>
            <person name="Sutton G."/>
        </authorList>
    </citation>
    <scope>NUCLEOTIDE SEQUENCE [LARGE SCALE GENOMIC DNA]</scope>
    <source>
        <strain>G9842</strain>
    </source>
</reference>
<dbReference type="EC" id="2.7.1.33" evidence="1"/>
<dbReference type="EMBL" id="CP001186">
    <property type="protein sequence ID" value="ACK94648.1"/>
    <property type="molecule type" value="Genomic_DNA"/>
</dbReference>
<dbReference type="RefSeq" id="WP_000578366.1">
    <property type="nucleotide sequence ID" value="NC_011772.1"/>
</dbReference>
<dbReference type="SMR" id="B7ISX6"/>
<dbReference type="KEGG" id="bcg:BCG9842_B5243"/>
<dbReference type="HOGENOM" id="CLU_066627_1_0_9"/>
<dbReference type="UniPathway" id="UPA00241">
    <property type="reaction ID" value="UER00352"/>
</dbReference>
<dbReference type="Proteomes" id="UP000006744">
    <property type="component" value="Chromosome"/>
</dbReference>
<dbReference type="GO" id="GO:0005737">
    <property type="term" value="C:cytoplasm"/>
    <property type="evidence" value="ECO:0007669"/>
    <property type="project" value="UniProtKB-SubCell"/>
</dbReference>
<dbReference type="GO" id="GO:0005524">
    <property type="term" value="F:ATP binding"/>
    <property type="evidence" value="ECO:0007669"/>
    <property type="project" value="UniProtKB-UniRule"/>
</dbReference>
<dbReference type="GO" id="GO:0046872">
    <property type="term" value="F:metal ion binding"/>
    <property type="evidence" value="ECO:0007669"/>
    <property type="project" value="UniProtKB-KW"/>
</dbReference>
<dbReference type="GO" id="GO:0004594">
    <property type="term" value="F:pantothenate kinase activity"/>
    <property type="evidence" value="ECO:0007669"/>
    <property type="project" value="UniProtKB-UniRule"/>
</dbReference>
<dbReference type="GO" id="GO:0015937">
    <property type="term" value="P:coenzyme A biosynthetic process"/>
    <property type="evidence" value="ECO:0007669"/>
    <property type="project" value="UniProtKB-UniRule"/>
</dbReference>
<dbReference type="CDD" id="cd24015">
    <property type="entry name" value="ASKHA_NBD_PanK-III"/>
    <property type="match status" value="1"/>
</dbReference>
<dbReference type="Gene3D" id="3.30.420.40">
    <property type="match status" value="2"/>
</dbReference>
<dbReference type="HAMAP" id="MF_01274">
    <property type="entry name" value="Pantothen_kinase_3"/>
    <property type="match status" value="1"/>
</dbReference>
<dbReference type="InterPro" id="IPR043129">
    <property type="entry name" value="ATPase_NBD"/>
</dbReference>
<dbReference type="InterPro" id="IPR004619">
    <property type="entry name" value="Type_III_PanK"/>
</dbReference>
<dbReference type="NCBIfam" id="TIGR00671">
    <property type="entry name" value="baf"/>
    <property type="match status" value="1"/>
</dbReference>
<dbReference type="NCBIfam" id="NF009843">
    <property type="entry name" value="PRK13318.1-1"/>
    <property type="match status" value="1"/>
</dbReference>
<dbReference type="NCBIfam" id="NF009847">
    <property type="entry name" value="PRK13318.1-5"/>
    <property type="match status" value="1"/>
</dbReference>
<dbReference type="NCBIfam" id="NF009848">
    <property type="entry name" value="PRK13318.1-6"/>
    <property type="match status" value="1"/>
</dbReference>
<dbReference type="NCBIfam" id="NF009855">
    <property type="entry name" value="PRK13321.1"/>
    <property type="match status" value="1"/>
</dbReference>
<dbReference type="PANTHER" id="PTHR34265">
    <property type="entry name" value="TYPE III PANTOTHENATE KINASE"/>
    <property type="match status" value="1"/>
</dbReference>
<dbReference type="PANTHER" id="PTHR34265:SF1">
    <property type="entry name" value="TYPE III PANTOTHENATE KINASE"/>
    <property type="match status" value="1"/>
</dbReference>
<dbReference type="Pfam" id="PF03309">
    <property type="entry name" value="Pan_kinase"/>
    <property type="match status" value="1"/>
</dbReference>
<dbReference type="SUPFAM" id="SSF53067">
    <property type="entry name" value="Actin-like ATPase domain"/>
    <property type="match status" value="2"/>
</dbReference>
<accession>B7ISX6</accession>
<comment type="function">
    <text evidence="1">Catalyzes the phosphorylation of pantothenate (Pan), the first step in CoA biosynthesis.</text>
</comment>
<comment type="catalytic activity">
    <reaction evidence="1">
        <text>(R)-pantothenate + ATP = (R)-4'-phosphopantothenate + ADP + H(+)</text>
        <dbReference type="Rhea" id="RHEA:16373"/>
        <dbReference type="ChEBI" id="CHEBI:10986"/>
        <dbReference type="ChEBI" id="CHEBI:15378"/>
        <dbReference type="ChEBI" id="CHEBI:29032"/>
        <dbReference type="ChEBI" id="CHEBI:30616"/>
        <dbReference type="ChEBI" id="CHEBI:456216"/>
        <dbReference type="EC" id="2.7.1.33"/>
    </reaction>
</comment>
<comment type="cofactor">
    <cofactor evidence="1">
        <name>NH4(+)</name>
        <dbReference type="ChEBI" id="CHEBI:28938"/>
    </cofactor>
    <cofactor evidence="1">
        <name>K(+)</name>
        <dbReference type="ChEBI" id="CHEBI:29103"/>
    </cofactor>
    <text evidence="1">A monovalent cation. Ammonium or potassium.</text>
</comment>
<comment type="pathway">
    <text evidence="1">Cofactor biosynthesis; coenzyme A biosynthesis; CoA from (R)-pantothenate: step 1/5.</text>
</comment>
<comment type="subunit">
    <text evidence="1">Homodimer.</text>
</comment>
<comment type="subcellular location">
    <subcellularLocation>
        <location evidence="1">Cytoplasm</location>
    </subcellularLocation>
</comment>
<comment type="similarity">
    <text evidence="1">Belongs to the type III pantothenate kinase family.</text>
</comment>
<proteinExistence type="inferred from homology"/>
<protein>
    <recommendedName>
        <fullName evidence="1">Type III pantothenate kinase</fullName>
        <ecNumber evidence="1">2.7.1.33</ecNumber>
    </recommendedName>
    <alternativeName>
        <fullName evidence="1">PanK-III</fullName>
    </alternativeName>
    <alternativeName>
        <fullName evidence="1">Pantothenic acid kinase</fullName>
    </alternativeName>
</protein>
<sequence length="262" mass="29076">MIFVLDVGNTNAVLGVFEEGELRQHWRMETDRHKTEDEYGMLVKQLLDHEGLSFEDVKGIIVSSVVPPIMFALERMCEKYFKIKPLVVGPGIKTGLNIKYENPREVGADRIVNAVAGIQLYGSPLIIVDFGTATTYCYINEEKHYMGGVITPGIMISAEALYSRAAKLPRIEITKPSSVVGKNTVSAMQSGILYGYVGQVEGIVKRMKEEAKQEPKVIATGGLAKLISEESNVIDIVDPFLTLKGLYMLYERNANLQQEKGE</sequence>
<gene>
    <name evidence="1" type="primary">coaX</name>
    <name type="ordered locus">BCG9842_B5243</name>
</gene>
<name>COAX_BACC2</name>
<keyword id="KW-0067">ATP-binding</keyword>
<keyword id="KW-0173">Coenzyme A biosynthesis</keyword>
<keyword id="KW-0963">Cytoplasm</keyword>
<keyword id="KW-0418">Kinase</keyword>
<keyword id="KW-0479">Metal-binding</keyword>
<keyword id="KW-0547">Nucleotide-binding</keyword>
<keyword id="KW-0630">Potassium</keyword>
<keyword id="KW-0808">Transferase</keyword>